<protein>
    <recommendedName>
        <fullName evidence="1">DNA ligase</fullName>
        <ecNumber evidence="1">6.5.1.2</ecNumber>
    </recommendedName>
    <alternativeName>
        <fullName evidence="1">Polydeoxyribonucleotide synthase [NAD(+)]</fullName>
    </alternativeName>
</protein>
<comment type="function">
    <text evidence="1">DNA ligase that catalyzes the formation of phosphodiester linkages between 5'-phosphoryl and 3'-hydroxyl groups in double-stranded DNA using NAD as a coenzyme and as the energy source for the reaction. It is essential for DNA replication and repair of damaged DNA.</text>
</comment>
<comment type="catalytic activity">
    <reaction evidence="1">
        <text>NAD(+) + (deoxyribonucleotide)n-3'-hydroxyl + 5'-phospho-(deoxyribonucleotide)m = (deoxyribonucleotide)n+m + AMP + beta-nicotinamide D-nucleotide.</text>
        <dbReference type="EC" id="6.5.1.2"/>
    </reaction>
</comment>
<comment type="cofactor">
    <cofactor evidence="1">
        <name>Mg(2+)</name>
        <dbReference type="ChEBI" id="CHEBI:18420"/>
    </cofactor>
    <cofactor evidence="1">
        <name>Mn(2+)</name>
        <dbReference type="ChEBI" id="CHEBI:29035"/>
    </cofactor>
</comment>
<comment type="similarity">
    <text evidence="1">Belongs to the NAD-dependent DNA ligase family. LigA subfamily.</text>
</comment>
<feature type="chain" id="PRO_0000340392" description="DNA ligase">
    <location>
        <begin position="1"/>
        <end position="678"/>
    </location>
</feature>
<feature type="domain" description="BRCT" evidence="1">
    <location>
        <begin position="589"/>
        <end position="678"/>
    </location>
</feature>
<feature type="active site" description="N6-AMP-lysine intermediate" evidence="1">
    <location>
        <position position="117"/>
    </location>
</feature>
<feature type="binding site" evidence="1">
    <location>
        <begin position="35"/>
        <end position="39"/>
    </location>
    <ligand>
        <name>NAD(+)</name>
        <dbReference type="ChEBI" id="CHEBI:57540"/>
    </ligand>
</feature>
<feature type="binding site" evidence="1">
    <location>
        <begin position="84"/>
        <end position="85"/>
    </location>
    <ligand>
        <name>NAD(+)</name>
        <dbReference type="ChEBI" id="CHEBI:57540"/>
    </ligand>
</feature>
<feature type="binding site" evidence="1">
    <location>
        <position position="115"/>
    </location>
    <ligand>
        <name>NAD(+)</name>
        <dbReference type="ChEBI" id="CHEBI:57540"/>
    </ligand>
</feature>
<feature type="binding site" evidence="1">
    <location>
        <position position="138"/>
    </location>
    <ligand>
        <name>NAD(+)</name>
        <dbReference type="ChEBI" id="CHEBI:57540"/>
    </ligand>
</feature>
<feature type="binding site" evidence="1">
    <location>
        <position position="172"/>
    </location>
    <ligand>
        <name>NAD(+)</name>
        <dbReference type="ChEBI" id="CHEBI:57540"/>
    </ligand>
</feature>
<feature type="binding site" evidence="1">
    <location>
        <position position="288"/>
    </location>
    <ligand>
        <name>NAD(+)</name>
        <dbReference type="ChEBI" id="CHEBI:57540"/>
    </ligand>
</feature>
<feature type="binding site" evidence="1">
    <location>
        <position position="312"/>
    </location>
    <ligand>
        <name>NAD(+)</name>
        <dbReference type="ChEBI" id="CHEBI:57540"/>
    </ligand>
</feature>
<feature type="binding site" evidence="1">
    <location>
        <position position="406"/>
    </location>
    <ligand>
        <name>Zn(2+)</name>
        <dbReference type="ChEBI" id="CHEBI:29105"/>
    </ligand>
</feature>
<feature type="binding site" evidence="1">
    <location>
        <position position="409"/>
    </location>
    <ligand>
        <name>Zn(2+)</name>
        <dbReference type="ChEBI" id="CHEBI:29105"/>
    </ligand>
</feature>
<feature type="binding site" evidence="1">
    <location>
        <position position="425"/>
    </location>
    <ligand>
        <name>Zn(2+)</name>
        <dbReference type="ChEBI" id="CHEBI:29105"/>
    </ligand>
</feature>
<feature type="binding site" evidence="1">
    <location>
        <position position="430"/>
    </location>
    <ligand>
        <name>Zn(2+)</name>
        <dbReference type="ChEBI" id="CHEBI:29105"/>
    </ligand>
</feature>
<sequence>MKIPEDIKKRIEKLREEIEYHNYRYYVLADPIISDEEYDRLMQELIELEKKYPELVTPDSPSQRVGEKVLDEFRSVEHSEPMLSLDNTYDEAQIREFDKRVRKLLEKDTIEYVTELKIDGVSVALRYENGRFVLGLSRGDGTRGDDITENLKKVRSIPLILREPVTVEVRGEIYMPTEEFERLNEERKKVDGPLFANPRNATAGTLRQLDTSVIRNRRLDSFIYYVLSPERYGLQTQWDALKWLKKIGFKVNPYSQLCQNIDQVIDYWKQWIEKKSELSYWVDGVVVKVNHFNFQSILGSTSRSPRWAIAFKFPAQRAKTRVLNIIVQVGRTGILTPVAELEPIQLAGTVVKRVSLHNFDYIEEKDIRIGDQVYVEKSGGIIPQVVSVIADERNGSEKKIEIPSKCPVCSGKVGKIDSEDVALRCLNPHCPAKLKRALETFVSRGALNIKGLGEKLIDRLVDSGLVKDIADIFYLTPFELSQLGSGIGQKMIANLLAQIEQAKKTPLHKILTGLGIPLVGEKTARILTQKFRSIKRLLSSSVDELTQIEGIGIEIAKNIREYFDNEKTRQIIGKLEKAGLNLEEKEAVVQSKILSNLTFAVTGTLKNFTRDQIKQLVQSLGGQVTDSVSKSTDYVIVGDNPGSKLTKARNLGVKLLTEDEFLQFVKIDIKNLRQQKLF</sequence>
<proteinExistence type="inferred from homology"/>
<organism>
    <name type="scientific">Pseudothermotoga lettingae (strain ATCC BAA-301 / DSM 14385 / NBRC 107922 / TMO)</name>
    <name type="common">Thermotoga lettingae</name>
    <dbReference type="NCBI Taxonomy" id="416591"/>
    <lineage>
        <taxon>Bacteria</taxon>
        <taxon>Thermotogati</taxon>
        <taxon>Thermotogota</taxon>
        <taxon>Thermotogae</taxon>
        <taxon>Thermotogales</taxon>
        <taxon>Thermotogaceae</taxon>
        <taxon>Pseudothermotoga</taxon>
    </lineage>
</organism>
<gene>
    <name evidence="1" type="primary">ligA</name>
    <name type="ordered locus">Tlet_0709</name>
</gene>
<dbReference type="EC" id="6.5.1.2" evidence="1"/>
<dbReference type="EMBL" id="CP000812">
    <property type="protein sequence ID" value="ABV33275.1"/>
    <property type="molecule type" value="Genomic_DNA"/>
</dbReference>
<dbReference type="RefSeq" id="WP_012002756.1">
    <property type="nucleotide sequence ID" value="NZ_BSDV01000001.1"/>
</dbReference>
<dbReference type="SMR" id="A8F541"/>
<dbReference type="STRING" id="416591.Tlet_0709"/>
<dbReference type="KEGG" id="tle:Tlet_0709"/>
<dbReference type="eggNOG" id="COG0272">
    <property type="taxonomic scope" value="Bacteria"/>
</dbReference>
<dbReference type="HOGENOM" id="CLU_007764_2_1_0"/>
<dbReference type="OrthoDB" id="9759736at2"/>
<dbReference type="Proteomes" id="UP000002016">
    <property type="component" value="Chromosome"/>
</dbReference>
<dbReference type="GO" id="GO:0005829">
    <property type="term" value="C:cytosol"/>
    <property type="evidence" value="ECO:0007669"/>
    <property type="project" value="TreeGrafter"/>
</dbReference>
<dbReference type="GO" id="GO:0003677">
    <property type="term" value="F:DNA binding"/>
    <property type="evidence" value="ECO:0007669"/>
    <property type="project" value="InterPro"/>
</dbReference>
<dbReference type="GO" id="GO:0003911">
    <property type="term" value="F:DNA ligase (NAD+) activity"/>
    <property type="evidence" value="ECO:0007669"/>
    <property type="project" value="UniProtKB-UniRule"/>
</dbReference>
<dbReference type="GO" id="GO:0046872">
    <property type="term" value="F:metal ion binding"/>
    <property type="evidence" value="ECO:0007669"/>
    <property type="project" value="UniProtKB-KW"/>
</dbReference>
<dbReference type="GO" id="GO:0006281">
    <property type="term" value="P:DNA repair"/>
    <property type="evidence" value="ECO:0007669"/>
    <property type="project" value="UniProtKB-KW"/>
</dbReference>
<dbReference type="GO" id="GO:0006260">
    <property type="term" value="P:DNA replication"/>
    <property type="evidence" value="ECO:0007669"/>
    <property type="project" value="UniProtKB-KW"/>
</dbReference>
<dbReference type="CDD" id="cd17748">
    <property type="entry name" value="BRCT_DNA_ligase_like"/>
    <property type="match status" value="1"/>
</dbReference>
<dbReference type="CDD" id="cd00114">
    <property type="entry name" value="LIGANc"/>
    <property type="match status" value="1"/>
</dbReference>
<dbReference type="FunFam" id="1.10.150.20:FF:000006">
    <property type="entry name" value="DNA ligase"/>
    <property type="match status" value="1"/>
</dbReference>
<dbReference type="FunFam" id="1.10.150.20:FF:000007">
    <property type="entry name" value="DNA ligase"/>
    <property type="match status" value="1"/>
</dbReference>
<dbReference type="FunFam" id="1.10.287.610:FF:000002">
    <property type="entry name" value="DNA ligase"/>
    <property type="match status" value="1"/>
</dbReference>
<dbReference type="FunFam" id="2.40.50.140:FF:000012">
    <property type="entry name" value="DNA ligase"/>
    <property type="match status" value="1"/>
</dbReference>
<dbReference type="FunFam" id="3.30.470.30:FF:000001">
    <property type="entry name" value="DNA ligase"/>
    <property type="match status" value="1"/>
</dbReference>
<dbReference type="Gene3D" id="6.20.10.30">
    <property type="match status" value="1"/>
</dbReference>
<dbReference type="Gene3D" id="1.10.150.20">
    <property type="entry name" value="5' to 3' exonuclease, C-terminal subdomain"/>
    <property type="match status" value="2"/>
</dbReference>
<dbReference type="Gene3D" id="3.40.50.10190">
    <property type="entry name" value="BRCT domain"/>
    <property type="match status" value="1"/>
</dbReference>
<dbReference type="Gene3D" id="3.30.470.30">
    <property type="entry name" value="DNA ligase/mRNA capping enzyme"/>
    <property type="match status" value="1"/>
</dbReference>
<dbReference type="Gene3D" id="1.10.287.610">
    <property type="entry name" value="Helix hairpin bin"/>
    <property type="match status" value="1"/>
</dbReference>
<dbReference type="Gene3D" id="2.40.50.140">
    <property type="entry name" value="Nucleic acid-binding proteins"/>
    <property type="match status" value="1"/>
</dbReference>
<dbReference type="HAMAP" id="MF_01588">
    <property type="entry name" value="DNA_ligase_A"/>
    <property type="match status" value="1"/>
</dbReference>
<dbReference type="InterPro" id="IPR001357">
    <property type="entry name" value="BRCT_dom"/>
</dbReference>
<dbReference type="InterPro" id="IPR036420">
    <property type="entry name" value="BRCT_dom_sf"/>
</dbReference>
<dbReference type="InterPro" id="IPR041663">
    <property type="entry name" value="DisA/LigA_HHH"/>
</dbReference>
<dbReference type="InterPro" id="IPR001679">
    <property type="entry name" value="DNA_ligase"/>
</dbReference>
<dbReference type="InterPro" id="IPR018239">
    <property type="entry name" value="DNA_ligase_AS"/>
</dbReference>
<dbReference type="InterPro" id="IPR033136">
    <property type="entry name" value="DNA_ligase_CS"/>
</dbReference>
<dbReference type="InterPro" id="IPR013839">
    <property type="entry name" value="DNAligase_adenylation"/>
</dbReference>
<dbReference type="InterPro" id="IPR013840">
    <property type="entry name" value="DNAligase_N"/>
</dbReference>
<dbReference type="InterPro" id="IPR003583">
    <property type="entry name" value="Hlx-hairpin-Hlx_DNA-bd_motif"/>
</dbReference>
<dbReference type="InterPro" id="IPR012340">
    <property type="entry name" value="NA-bd_OB-fold"/>
</dbReference>
<dbReference type="InterPro" id="IPR004150">
    <property type="entry name" value="NAD_DNA_ligase_OB"/>
</dbReference>
<dbReference type="InterPro" id="IPR010994">
    <property type="entry name" value="RuvA_2-like"/>
</dbReference>
<dbReference type="InterPro" id="IPR004149">
    <property type="entry name" value="Znf_DNAligase_C4"/>
</dbReference>
<dbReference type="NCBIfam" id="TIGR00575">
    <property type="entry name" value="dnlj"/>
    <property type="match status" value="1"/>
</dbReference>
<dbReference type="NCBIfam" id="NF005932">
    <property type="entry name" value="PRK07956.1"/>
    <property type="match status" value="1"/>
</dbReference>
<dbReference type="PANTHER" id="PTHR23389">
    <property type="entry name" value="CHROMOSOME TRANSMISSION FIDELITY FACTOR 18"/>
    <property type="match status" value="1"/>
</dbReference>
<dbReference type="PANTHER" id="PTHR23389:SF9">
    <property type="entry name" value="DNA LIGASE"/>
    <property type="match status" value="1"/>
</dbReference>
<dbReference type="Pfam" id="PF00533">
    <property type="entry name" value="BRCT"/>
    <property type="match status" value="1"/>
</dbReference>
<dbReference type="Pfam" id="PF01653">
    <property type="entry name" value="DNA_ligase_aden"/>
    <property type="match status" value="1"/>
</dbReference>
<dbReference type="Pfam" id="PF03120">
    <property type="entry name" value="DNA_ligase_OB"/>
    <property type="match status" value="1"/>
</dbReference>
<dbReference type="Pfam" id="PF03119">
    <property type="entry name" value="DNA_ligase_ZBD"/>
    <property type="match status" value="1"/>
</dbReference>
<dbReference type="Pfam" id="PF12826">
    <property type="entry name" value="HHH_2"/>
    <property type="match status" value="1"/>
</dbReference>
<dbReference type="Pfam" id="PF22745">
    <property type="entry name" value="Nlig-Ia"/>
    <property type="match status" value="1"/>
</dbReference>
<dbReference type="PIRSF" id="PIRSF001604">
    <property type="entry name" value="LigA"/>
    <property type="match status" value="1"/>
</dbReference>
<dbReference type="SMART" id="SM00292">
    <property type="entry name" value="BRCT"/>
    <property type="match status" value="1"/>
</dbReference>
<dbReference type="SMART" id="SM00278">
    <property type="entry name" value="HhH1"/>
    <property type="match status" value="2"/>
</dbReference>
<dbReference type="SMART" id="SM00532">
    <property type="entry name" value="LIGANc"/>
    <property type="match status" value="1"/>
</dbReference>
<dbReference type="SUPFAM" id="SSF52113">
    <property type="entry name" value="BRCT domain"/>
    <property type="match status" value="1"/>
</dbReference>
<dbReference type="SUPFAM" id="SSF56091">
    <property type="entry name" value="DNA ligase/mRNA capping enzyme, catalytic domain"/>
    <property type="match status" value="1"/>
</dbReference>
<dbReference type="SUPFAM" id="SSF50249">
    <property type="entry name" value="Nucleic acid-binding proteins"/>
    <property type="match status" value="1"/>
</dbReference>
<dbReference type="SUPFAM" id="SSF47781">
    <property type="entry name" value="RuvA domain 2-like"/>
    <property type="match status" value="1"/>
</dbReference>
<dbReference type="PROSITE" id="PS50172">
    <property type="entry name" value="BRCT"/>
    <property type="match status" value="1"/>
</dbReference>
<dbReference type="PROSITE" id="PS01055">
    <property type="entry name" value="DNA_LIGASE_N1"/>
    <property type="match status" value="1"/>
</dbReference>
<dbReference type="PROSITE" id="PS01056">
    <property type="entry name" value="DNA_LIGASE_N2"/>
    <property type="match status" value="1"/>
</dbReference>
<name>DNLJ_PSELT</name>
<accession>A8F541</accession>
<reference key="1">
    <citation type="submission" date="2007-08" db="EMBL/GenBank/DDBJ databases">
        <title>Complete sequence of Thermotoga lettingae TMO.</title>
        <authorList>
            <consortium name="US DOE Joint Genome Institute"/>
            <person name="Copeland A."/>
            <person name="Lucas S."/>
            <person name="Lapidus A."/>
            <person name="Barry K."/>
            <person name="Glavina del Rio T."/>
            <person name="Dalin E."/>
            <person name="Tice H."/>
            <person name="Pitluck S."/>
            <person name="Foster B."/>
            <person name="Bruce D."/>
            <person name="Schmutz J."/>
            <person name="Larimer F."/>
            <person name="Land M."/>
            <person name="Hauser L."/>
            <person name="Kyrpides N."/>
            <person name="Mikhailova N."/>
            <person name="Nelson K."/>
            <person name="Gogarten J.P."/>
            <person name="Noll K."/>
            <person name="Richardson P."/>
        </authorList>
    </citation>
    <scope>NUCLEOTIDE SEQUENCE [LARGE SCALE GENOMIC DNA]</scope>
    <source>
        <strain>ATCC BAA-301 / DSM 14385 / NBRC 107922 / TMO</strain>
    </source>
</reference>
<keyword id="KW-0227">DNA damage</keyword>
<keyword id="KW-0234">DNA repair</keyword>
<keyword id="KW-0235">DNA replication</keyword>
<keyword id="KW-0436">Ligase</keyword>
<keyword id="KW-0460">Magnesium</keyword>
<keyword id="KW-0464">Manganese</keyword>
<keyword id="KW-0479">Metal-binding</keyword>
<keyword id="KW-0520">NAD</keyword>
<keyword id="KW-1185">Reference proteome</keyword>
<keyword id="KW-0862">Zinc</keyword>
<evidence type="ECO:0000255" key="1">
    <source>
        <dbReference type="HAMAP-Rule" id="MF_01588"/>
    </source>
</evidence>